<keyword id="KW-0028">Amino-acid biosynthesis</keyword>
<keyword id="KW-0061">Asparagine biosynthesis</keyword>
<keyword id="KW-0067">ATP-binding</keyword>
<keyword id="KW-0963">Cytoplasm</keyword>
<keyword id="KW-0436">Ligase</keyword>
<keyword id="KW-0547">Nucleotide-binding</keyword>
<keyword id="KW-1185">Reference proteome</keyword>
<reference key="1">
    <citation type="journal article" date="2008" name="DNA Res.">
        <title>Comparative genome analysis of Lactobacillus reuteri and Lactobacillus fermentum reveal a genomic island for reuterin and cobalamin production.</title>
        <authorList>
            <person name="Morita H."/>
            <person name="Toh H."/>
            <person name="Fukuda S."/>
            <person name="Horikawa H."/>
            <person name="Oshima K."/>
            <person name="Suzuki T."/>
            <person name="Murakami M."/>
            <person name="Hisamatsu S."/>
            <person name="Kato Y."/>
            <person name="Takizawa T."/>
            <person name="Fukuoka H."/>
            <person name="Yoshimura T."/>
            <person name="Itoh K."/>
            <person name="O'Sullivan D.J."/>
            <person name="McKay L.L."/>
            <person name="Ohno H."/>
            <person name="Kikuchi J."/>
            <person name="Masaoka T."/>
            <person name="Hattori M."/>
        </authorList>
    </citation>
    <scope>NUCLEOTIDE SEQUENCE [LARGE SCALE GENOMIC DNA]</scope>
    <source>
        <strain>NBRC 3956 / LMG 18251</strain>
    </source>
</reference>
<sequence length="336" mass="38795">MSLIVPENYDPKLSIRETEEAIRYIRETFQDEIGKELNLQRMSAPMFVEQSTGLNDNLNGVEAPVSFTMKDLPGETIEIVHSLAKWKRFALKKYGFGLHEGLYTNMNAIRKDEDLDNFHSIYVDQWDWEKVIAKEERTEATLKATVRQVFKVIKHMEHEVWYKFPQAVYHLPDEIHFVTTQGLEDRWPELSPMEREDKIAKELGCVFVMKIGDKLQRSGEPHDGRAPDYDDWSLNGDIIFWYEPLQTKLEVSSMGIRVDERAMKEQLEKAHATDRAELPFHRDLLAGKMPYTIGGGIGQSRLCMLLLGKAHVGEVQASIWPEEMKEACAKAKIQLL</sequence>
<dbReference type="EC" id="6.3.1.1" evidence="1"/>
<dbReference type="EMBL" id="AP008937">
    <property type="protein sequence ID" value="BAG27938.1"/>
    <property type="molecule type" value="Genomic_DNA"/>
</dbReference>
<dbReference type="RefSeq" id="WP_012391652.1">
    <property type="nucleotide sequence ID" value="NC_010610.1"/>
</dbReference>
<dbReference type="SMR" id="B2GE56"/>
<dbReference type="KEGG" id="lfe:LAF_1602"/>
<dbReference type="PATRIC" id="fig|334390.5.peg.1763"/>
<dbReference type="eggNOG" id="COG2502">
    <property type="taxonomic scope" value="Bacteria"/>
</dbReference>
<dbReference type="HOGENOM" id="CLU_071543_0_0_9"/>
<dbReference type="UniPathway" id="UPA00134">
    <property type="reaction ID" value="UER00194"/>
</dbReference>
<dbReference type="Proteomes" id="UP000001697">
    <property type="component" value="Chromosome"/>
</dbReference>
<dbReference type="GO" id="GO:0005829">
    <property type="term" value="C:cytosol"/>
    <property type="evidence" value="ECO:0007669"/>
    <property type="project" value="TreeGrafter"/>
</dbReference>
<dbReference type="GO" id="GO:0004071">
    <property type="term" value="F:aspartate-ammonia ligase activity"/>
    <property type="evidence" value="ECO:0007669"/>
    <property type="project" value="UniProtKB-UniRule"/>
</dbReference>
<dbReference type="GO" id="GO:0005524">
    <property type="term" value="F:ATP binding"/>
    <property type="evidence" value="ECO:0007669"/>
    <property type="project" value="UniProtKB-UniRule"/>
</dbReference>
<dbReference type="GO" id="GO:0140096">
    <property type="term" value="F:catalytic activity, acting on a protein"/>
    <property type="evidence" value="ECO:0007669"/>
    <property type="project" value="UniProtKB-ARBA"/>
</dbReference>
<dbReference type="GO" id="GO:0016740">
    <property type="term" value="F:transferase activity"/>
    <property type="evidence" value="ECO:0007669"/>
    <property type="project" value="UniProtKB-ARBA"/>
</dbReference>
<dbReference type="GO" id="GO:0070981">
    <property type="term" value="P:L-asparagine biosynthetic process"/>
    <property type="evidence" value="ECO:0007669"/>
    <property type="project" value="UniProtKB-UniRule"/>
</dbReference>
<dbReference type="CDD" id="cd00645">
    <property type="entry name" value="AsnA"/>
    <property type="match status" value="1"/>
</dbReference>
<dbReference type="Gene3D" id="3.30.930.10">
    <property type="entry name" value="Bira Bifunctional Protein, Domain 2"/>
    <property type="match status" value="1"/>
</dbReference>
<dbReference type="HAMAP" id="MF_00555">
    <property type="entry name" value="AsnA"/>
    <property type="match status" value="1"/>
</dbReference>
<dbReference type="InterPro" id="IPR006195">
    <property type="entry name" value="aa-tRNA-synth_II"/>
</dbReference>
<dbReference type="InterPro" id="IPR045864">
    <property type="entry name" value="aa-tRNA-synth_II/BPL/LPL"/>
</dbReference>
<dbReference type="InterPro" id="IPR004618">
    <property type="entry name" value="AsnA"/>
</dbReference>
<dbReference type="NCBIfam" id="TIGR00669">
    <property type="entry name" value="asnA"/>
    <property type="match status" value="1"/>
</dbReference>
<dbReference type="PANTHER" id="PTHR30073">
    <property type="entry name" value="ASPARTATE--AMMONIA LIGASE"/>
    <property type="match status" value="1"/>
</dbReference>
<dbReference type="PANTHER" id="PTHR30073:SF5">
    <property type="entry name" value="ASPARTATE--AMMONIA LIGASE"/>
    <property type="match status" value="1"/>
</dbReference>
<dbReference type="Pfam" id="PF03590">
    <property type="entry name" value="AsnA"/>
    <property type="match status" value="1"/>
</dbReference>
<dbReference type="PIRSF" id="PIRSF001555">
    <property type="entry name" value="Asp_ammon_ligase"/>
    <property type="match status" value="1"/>
</dbReference>
<dbReference type="SUPFAM" id="SSF55681">
    <property type="entry name" value="Class II aaRS and biotin synthetases"/>
    <property type="match status" value="1"/>
</dbReference>
<dbReference type="PROSITE" id="PS50862">
    <property type="entry name" value="AA_TRNA_LIGASE_II"/>
    <property type="match status" value="1"/>
</dbReference>
<gene>
    <name evidence="1" type="primary">asnA</name>
    <name type="ordered locus">LAF_1602</name>
</gene>
<protein>
    <recommendedName>
        <fullName evidence="1">Aspartate--ammonia ligase</fullName>
        <ecNumber evidence="1">6.3.1.1</ecNumber>
    </recommendedName>
    <alternativeName>
        <fullName evidence="1">Asparagine synthetase A</fullName>
    </alternativeName>
</protein>
<evidence type="ECO:0000255" key="1">
    <source>
        <dbReference type="HAMAP-Rule" id="MF_00555"/>
    </source>
</evidence>
<comment type="catalytic activity">
    <reaction evidence="1">
        <text>L-aspartate + NH4(+) + ATP = L-asparagine + AMP + diphosphate + H(+)</text>
        <dbReference type="Rhea" id="RHEA:11372"/>
        <dbReference type="ChEBI" id="CHEBI:15378"/>
        <dbReference type="ChEBI" id="CHEBI:28938"/>
        <dbReference type="ChEBI" id="CHEBI:29991"/>
        <dbReference type="ChEBI" id="CHEBI:30616"/>
        <dbReference type="ChEBI" id="CHEBI:33019"/>
        <dbReference type="ChEBI" id="CHEBI:58048"/>
        <dbReference type="ChEBI" id="CHEBI:456215"/>
        <dbReference type="EC" id="6.3.1.1"/>
    </reaction>
</comment>
<comment type="pathway">
    <text evidence="1">Amino-acid biosynthesis; L-asparagine biosynthesis; L-asparagine from L-aspartate (ammonia route): step 1/1.</text>
</comment>
<comment type="subcellular location">
    <subcellularLocation>
        <location evidence="1">Cytoplasm</location>
    </subcellularLocation>
</comment>
<comment type="similarity">
    <text evidence="1">Belongs to the class-II aminoacyl-tRNA synthetase family. AsnA subfamily.</text>
</comment>
<name>ASNA_LIMF3</name>
<organism>
    <name type="scientific">Limosilactobacillus fermentum (strain NBRC 3956 / LMG 18251)</name>
    <name type="common">Lactobacillus fermentum</name>
    <dbReference type="NCBI Taxonomy" id="334390"/>
    <lineage>
        <taxon>Bacteria</taxon>
        <taxon>Bacillati</taxon>
        <taxon>Bacillota</taxon>
        <taxon>Bacilli</taxon>
        <taxon>Lactobacillales</taxon>
        <taxon>Lactobacillaceae</taxon>
        <taxon>Limosilactobacillus</taxon>
    </lineage>
</organism>
<feature type="chain" id="PRO_1000129121" description="Aspartate--ammonia ligase">
    <location>
        <begin position="1"/>
        <end position="336"/>
    </location>
</feature>
<proteinExistence type="inferred from homology"/>
<accession>B2GE56</accession>